<evidence type="ECO:0000250" key="1">
    <source>
        <dbReference type="UniProtKB" id="Q0KL01"/>
    </source>
</evidence>
<evidence type="ECO:0000250" key="2">
    <source>
        <dbReference type="UniProtKB" id="Q14CS0"/>
    </source>
</evidence>
<evidence type="ECO:0000255" key="3">
    <source>
        <dbReference type="PROSITE-ProRule" id="PRU00215"/>
    </source>
</evidence>
<evidence type="ECO:0000255" key="4">
    <source>
        <dbReference type="PROSITE-ProRule" id="PRU00732"/>
    </source>
</evidence>
<evidence type="ECO:0000256" key="5">
    <source>
        <dbReference type="SAM" id="MobiDB-lite"/>
    </source>
</evidence>
<evidence type="ECO:0000269" key="6">
    <source>
    </source>
</evidence>
<evidence type="ECO:0000305" key="7"/>
<evidence type="ECO:0007744" key="8">
    <source>
    </source>
</evidence>
<protein>
    <recommendedName>
        <fullName>UBX domain-containing protein 2B</fullName>
    </recommendedName>
    <alternativeName>
        <fullName>NSFL1 cofactor p37</fullName>
    </alternativeName>
    <alternativeName>
        <fullName>p97 cofactor p37</fullName>
    </alternativeName>
</protein>
<reference key="1">
    <citation type="journal article" date="2004" name="Nature">
        <title>Genome sequence of the Brown Norway rat yields insights into mammalian evolution.</title>
        <authorList>
            <person name="Gibbs R.A."/>
            <person name="Weinstock G.M."/>
            <person name="Metzker M.L."/>
            <person name="Muzny D.M."/>
            <person name="Sodergren E.J."/>
            <person name="Scherer S."/>
            <person name="Scott G."/>
            <person name="Steffen D."/>
            <person name="Worley K.C."/>
            <person name="Burch P.E."/>
            <person name="Okwuonu G."/>
            <person name="Hines S."/>
            <person name="Lewis L."/>
            <person name="Deramo C."/>
            <person name="Delgado O."/>
            <person name="Dugan-Rocha S."/>
            <person name="Miner G."/>
            <person name="Morgan M."/>
            <person name="Hawes A."/>
            <person name="Gill R."/>
            <person name="Holt R.A."/>
            <person name="Adams M.D."/>
            <person name="Amanatides P.G."/>
            <person name="Baden-Tillson H."/>
            <person name="Barnstead M."/>
            <person name="Chin S."/>
            <person name="Evans C.A."/>
            <person name="Ferriera S."/>
            <person name="Fosler C."/>
            <person name="Glodek A."/>
            <person name="Gu Z."/>
            <person name="Jennings D."/>
            <person name="Kraft C.L."/>
            <person name="Nguyen T."/>
            <person name="Pfannkoch C.M."/>
            <person name="Sitter C."/>
            <person name="Sutton G.G."/>
            <person name="Venter J.C."/>
            <person name="Woodage T."/>
            <person name="Smith D."/>
            <person name="Lee H.-M."/>
            <person name="Gustafson E."/>
            <person name="Cahill P."/>
            <person name="Kana A."/>
            <person name="Doucette-Stamm L."/>
            <person name="Weinstock K."/>
            <person name="Fechtel K."/>
            <person name="Weiss R.B."/>
            <person name="Dunn D.M."/>
            <person name="Green E.D."/>
            <person name="Blakesley R.W."/>
            <person name="Bouffard G.G."/>
            <person name="De Jong P.J."/>
            <person name="Osoegawa K."/>
            <person name="Zhu B."/>
            <person name="Marra M."/>
            <person name="Schein J."/>
            <person name="Bosdet I."/>
            <person name="Fjell C."/>
            <person name="Jones S."/>
            <person name="Krzywinski M."/>
            <person name="Mathewson C."/>
            <person name="Siddiqui A."/>
            <person name="Wye N."/>
            <person name="McPherson J."/>
            <person name="Zhao S."/>
            <person name="Fraser C.M."/>
            <person name="Shetty J."/>
            <person name="Shatsman S."/>
            <person name="Geer K."/>
            <person name="Chen Y."/>
            <person name="Abramzon S."/>
            <person name="Nierman W.C."/>
            <person name="Havlak P.H."/>
            <person name="Chen R."/>
            <person name="Durbin K.J."/>
            <person name="Egan A."/>
            <person name="Ren Y."/>
            <person name="Song X.-Z."/>
            <person name="Li B."/>
            <person name="Liu Y."/>
            <person name="Qin X."/>
            <person name="Cawley S."/>
            <person name="Cooney A.J."/>
            <person name="D'Souza L.M."/>
            <person name="Martin K."/>
            <person name="Wu J.Q."/>
            <person name="Gonzalez-Garay M.L."/>
            <person name="Jackson A.R."/>
            <person name="Kalafus K.J."/>
            <person name="McLeod M.P."/>
            <person name="Milosavljevic A."/>
            <person name="Virk D."/>
            <person name="Volkov A."/>
            <person name="Wheeler D.A."/>
            <person name="Zhang Z."/>
            <person name="Bailey J.A."/>
            <person name="Eichler E.E."/>
            <person name="Tuzun E."/>
            <person name="Birney E."/>
            <person name="Mongin E."/>
            <person name="Ureta-Vidal A."/>
            <person name="Woodwark C."/>
            <person name="Zdobnov E."/>
            <person name="Bork P."/>
            <person name="Suyama M."/>
            <person name="Torrents D."/>
            <person name="Alexandersson M."/>
            <person name="Trask B.J."/>
            <person name="Young J.M."/>
            <person name="Huang H."/>
            <person name="Wang H."/>
            <person name="Xing H."/>
            <person name="Daniels S."/>
            <person name="Gietzen D."/>
            <person name="Schmidt J."/>
            <person name="Stevens K."/>
            <person name="Vitt U."/>
            <person name="Wingrove J."/>
            <person name="Camara F."/>
            <person name="Mar Alba M."/>
            <person name="Abril J.F."/>
            <person name="Guigo R."/>
            <person name="Smit A."/>
            <person name="Dubchak I."/>
            <person name="Rubin E.M."/>
            <person name="Couronne O."/>
            <person name="Poliakov A."/>
            <person name="Huebner N."/>
            <person name="Ganten D."/>
            <person name="Goesele C."/>
            <person name="Hummel O."/>
            <person name="Kreitler T."/>
            <person name="Lee Y.-A."/>
            <person name="Monti J."/>
            <person name="Schulz H."/>
            <person name="Zimdahl H."/>
            <person name="Himmelbauer H."/>
            <person name="Lehrach H."/>
            <person name="Jacob H.J."/>
            <person name="Bromberg S."/>
            <person name="Gullings-Handley J."/>
            <person name="Jensen-Seaman M.I."/>
            <person name="Kwitek A.E."/>
            <person name="Lazar J."/>
            <person name="Pasko D."/>
            <person name="Tonellato P.J."/>
            <person name="Twigger S."/>
            <person name="Ponting C.P."/>
            <person name="Duarte J.M."/>
            <person name="Rice S."/>
            <person name="Goodstadt L."/>
            <person name="Beatson S.A."/>
            <person name="Emes R.D."/>
            <person name="Winter E.E."/>
            <person name="Webber C."/>
            <person name="Brandt P."/>
            <person name="Nyakatura G."/>
            <person name="Adetobi M."/>
            <person name="Chiaromonte F."/>
            <person name="Elnitski L."/>
            <person name="Eswara P."/>
            <person name="Hardison R.C."/>
            <person name="Hou M."/>
            <person name="Kolbe D."/>
            <person name="Makova K."/>
            <person name="Miller W."/>
            <person name="Nekrutenko A."/>
            <person name="Riemer C."/>
            <person name="Schwartz S."/>
            <person name="Taylor J."/>
            <person name="Yang S."/>
            <person name="Zhang Y."/>
            <person name="Lindpaintner K."/>
            <person name="Andrews T.D."/>
            <person name="Caccamo M."/>
            <person name="Clamp M."/>
            <person name="Clarke L."/>
            <person name="Curwen V."/>
            <person name="Durbin R.M."/>
            <person name="Eyras E."/>
            <person name="Searle S.M."/>
            <person name="Cooper G.M."/>
            <person name="Batzoglou S."/>
            <person name="Brudno M."/>
            <person name="Sidow A."/>
            <person name="Stone E.A."/>
            <person name="Payseur B.A."/>
            <person name="Bourque G."/>
            <person name="Lopez-Otin C."/>
            <person name="Puente X.S."/>
            <person name="Chakrabarti K."/>
            <person name="Chatterji S."/>
            <person name="Dewey C."/>
            <person name="Pachter L."/>
            <person name="Bray N."/>
            <person name="Yap V.B."/>
            <person name="Caspi A."/>
            <person name="Tesler G."/>
            <person name="Pevzner P.A."/>
            <person name="Haussler D."/>
            <person name="Roskin K.M."/>
            <person name="Baertsch R."/>
            <person name="Clawson H."/>
            <person name="Furey T.S."/>
            <person name="Hinrichs A.S."/>
            <person name="Karolchik D."/>
            <person name="Kent W.J."/>
            <person name="Rosenbloom K.R."/>
            <person name="Trumbower H."/>
            <person name="Weirauch M."/>
            <person name="Cooper D.N."/>
            <person name="Stenson P.D."/>
            <person name="Ma B."/>
            <person name="Brent M."/>
            <person name="Arumugam M."/>
            <person name="Shteynberg D."/>
            <person name="Copley R.R."/>
            <person name="Taylor M.S."/>
            <person name="Riethman H."/>
            <person name="Mudunuri U."/>
            <person name="Peterson J."/>
            <person name="Guyer M."/>
            <person name="Felsenfeld A."/>
            <person name="Old S."/>
            <person name="Mockrin S."/>
            <person name="Collins F.S."/>
        </authorList>
    </citation>
    <scope>NUCLEOTIDE SEQUENCE [LARGE SCALE GENOMIC DNA]</scope>
    <source>
        <strain>Brown Norway</strain>
    </source>
</reference>
<reference key="2">
    <citation type="journal article" date="2006" name="Dev. Cell">
        <title>p37 is a p97 adaptor required for Golgi and ER biogenesis in interphase and at the end of mitosis.</title>
        <authorList>
            <person name="Uchiyama K."/>
            <person name="Totsukawa G."/>
            <person name="Puhka M."/>
            <person name="Kaneko Y."/>
            <person name="Jokitalo E."/>
            <person name="Dreveny I."/>
            <person name="Beuron F."/>
            <person name="Zhang X."/>
            <person name="Freemont P."/>
            <person name="Kondo H."/>
        </authorList>
    </citation>
    <scope>SUBCELLULAR LOCATION</scope>
    <scope>TISSUE SPECIFICITY</scope>
    <scope>INTERACTION WITH VCP</scope>
</reference>
<reference key="3">
    <citation type="journal article" date="2012" name="Nat. Commun.">
        <title>Quantitative maps of protein phosphorylation sites across 14 different rat organs and tissues.</title>
        <authorList>
            <person name="Lundby A."/>
            <person name="Secher A."/>
            <person name="Lage K."/>
            <person name="Nordsborg N.B."/>
            <person name="Dmytriyev A."/>
            <person name="Lundby C."/>
            <person name="Olsen J.V."/>
        </authorList>
    </citation>
    <scope>PHOSPHORYLATION [LARGE SCALE ANALYSIS] AT SER-234 AND SER-235</scope>
    <scope>IDENTIFICATION BY MASS SPECTROMETRY [LARGE SCALE ANALYSIS]</scope>
</reference>
<comment type="function">
    <text evidence="2">Adapter protein required for Golgi and endoplasmic reticulum biogenesis. Involved in Golgi and endoplasmic reticulum maintenance during interphase and in their reassembly at the end of mitosis. The complex formed with VCP has membrane fusion activity; membrane fusion activity requires USO1-GOLGA2 tethering and BET1L. VCPIP1 is also required, but not its deubiquitinating activity. Together with NSFL1C/p47, regulates the centrosomal levels of kinase AURKA/Aurora A during mitotic progression by promoting AURKA removal from centrosomes in prophase. Also, regulates spindle orientation during mitosis.</text>
</comment>
<comment type="subunit">
    <text evidence="6">Interacts with VCP. Does not bind ubiquitin.</text>
</comment>
<comment type="subcellular location">
    <subcellularLocation>
        <location evidence="6">Nucleus</location>
    </subcellularLocation>
    <subcellularLocation>
        <location evidence="6">Cytoplasm</location>
        <location evidence="6">Cytosol</location>
    </subcellularLocation>
    <subcellularLocation>
        <location evidence="6">Endoplasmic reticulum</location>
    </subcellularLocation>
    <subcellularLocation>
        <location evidence="6">Golgi apparatus</location>
    </subcellularLocation>
    <subcellularLocation>
        <location evidence="1">Cytoplasm</location>
        <location evidence="1">Cytoskeleton</location>
        <location evidence="1">Microtubule organizing center</location>
        <location evidence="1">Centrosome</location>
    </subcellularLocation>
    <text evidence="1">Localizes to centrosome during mitotic prophase and metaphase.</text>
</comment>
<comment type="tissue specificity">
    <text evidence="6">Present at high level in brain. Also present in liver, kidney, spleen, testis, lung and heart (at protein level).</text>
</comment>
<comment type="similarity">
    <text evidence="7">Belongs to the NSFL1C family.</text>
</comment>
<gene>
    <name type="primary">Ubxn2b</name>
</gene>
<sequence>MAEGGGAEPEEQERRSSRPRPPSARDLQLALAELYEDEMKCKSSKPDRSTATAFKSPRTPPLRLYSGDQEYGGLHIAQPPTGKIVNELFKEAREHGAVPLNEATRSSSDDKAKSFTGGGYRLGSSFYKRSEYIYGENQLQDVQILLRLWSNGFSLDDGELRPYSDPTNAQFLESVKRGEIPLELQRLVHGSQVSLDMEDHQDQEYIKPRLRFKAFSGEGQKLGSLTPEIVSTPSSPEEEDKSILNAAVLIDDSVPTTKIQIRLADGSRLIQRFNSTHRILDVRDFIVQSRPEFATTDFILVTSFPSKELTDESVTLQDADILNTVILQQLK</sequence>
<name>UBX2B_RAT</name>
<dbReference type="EMBL" id="AABR03041043">
    <property type="status" value="NOT_ANNOTATED_CDS"/>
    <property type="molecule type" value="Genomic_DNA"/>
</dbReference>
<dbReference type="RefSeq" id="NP_001101375.1">
    <property type="nucleotide sequence ID" value="NM_001107905.1"/>
</dbReference>
<dbReference type="RefSeq" id="XP_006237899.1">
    <property type="nucleotide sequence ID" value="XM_006237837.3"/>
</dbReference>
<dbReference type="SMR" id="P0C627"/>
<dbReference type="BioGRID" id="260285">
    <property type="interactions" value="1"/>
</dbReference>
<dbReference type="FunCoup" id="P0C627">
    <property type="interactions" value="3170"/>
</dbReference>
<dbReference type="STRING" id="10116.ENSRNOP00000012551"/>
<dbReference type="iPTMnet" id="P0C627"/>
<dbReference type="PhosphoSitePlus" id="P0C627"/>
<dbReference type="PaxDb" id="10116-ENSRNOP00000012551"/>
<dbReference type="Ensembl" id="ENSRNOT00000093925.1">
    <property type="protein sequence ID" value="ENSRNOP00000076685.1"/>
    <property type="gene ID" value="ENSRNOG00000071045.1"/>
</dbReference>
<dbReference type="GeneID" id="312965"/>
<dbReference type="KEGG" id="rno:312965"/>
<dbReference type="UCSC" id="RGD:1308557">
    <property type="organism name" value="rat"/>
</dbReference>
<dbReference type="AGR" id="RGD:1308557"/>
<dbReference type="CTD" id="137886"/>
<dbReference type="RGD" id="1308557">
    <property type="gene designation" value="Ubxn2b"/>
</dbReference>
<dbReference type="eggNOG" id="KOG2086">
    <property type="taxonomic scope" value="Eukaryota"/>
</dbReference>
<dbReference type="GeneTree" id="ENSGT00520000055567"/>
<dbReference type="HOGENOM" id="CLU_029402_0_0_1"/>
<dbReference type="InParanoid" id="P0C627"/>
<dbReference type="OMA" id="REVLHCN"/>
<dbReference type="OrthoDB" id="25887at2759"/>
<dbReference type="PhylomeDB" id="P0C627"/>
<dbReference type="TreeFam" id="TF312973"/>
<dbReference type="PRO" id="PR:P0C627"/>
<dbReference type="Proteomes" id="UP000002494">
    <property type="component" value="Chromosome 5"/>
</dbReference>
<dbReference type="Bgee" id="ENSRNOG00000009137">
    <property type="expression patterns" value="Expressed in frontal cortex and 19 other cell types or tissues"/>
</dbReference>
<dbReference type="GO" id="GO:0005829">
    <property type="term" value="C:cytosol"/>
    <property type="evidence" value="ECO:0000318"/>
    <property type="project" value="GO_Central"/>
</dbReference>
<dbReference type="GO" id="GO:0005783">
    <property type="term" value="C:endoplasmic reticulum"/>
    <property type="evidence" value="ECO:0007669"/>
    <property type="project" value="UniProtKB-SubCell"/>
</dbReference>
<dbReference type="GO" id="GO:0005794">
    <property type="term" value="C:Golgi apparatus"/>
    <property type="evidence" value="ECO:0007669"/>
    <property type="project" value="UniProtKB-SubCell"/>
</dbReference>
<dbReference type="GO" id="GO:0005634">
    <property type="term" value="C:nucleus"/>
    <property type="evidence" value="ECO:0000318"/>
    <property type="project" value="GO_Central"/>
</dbReference>
<dbReference type="GO" id="GO:0031616">
    <property type="term" value="C:spindle pole centrosome"/>
    <property type="evidence" value="ECO:0000266"/>
    <property type="project" value="RGD"/>
</dbReference>
<dbReference type="GO" id="GO:0043130">
    <property type="term" value="F:ubiquitin binding"/>
    <property type="evidence" value="ECO:0000318"/>
    <property type="project" value="GO_Central"/>
</dbReference>
<dbReference type="GO" id="GO:0000045">
    <property type="term" value="P:autophagosome assembly"/>
    <property type="evidence" value="ECO:0000318"/>
    <property type="project" value="GO_Central"/>
</dbReference>
<dbReference type="GO" id="GO:0000132">
    <property type="term" value="P:establishment of mitotic spindle orientation"/>
    <property type="evidence" value="ECO:0000266"/>
    <property type="project" value="RGD"/>
</dbReference>
<dbReference type="GO" id="GO:0007030">
    <property type="term" value="P:Golgi organization"/>
    <property type="evidence" value="ECO:0000318"/>
    <property type="project" value="GO_Central"/>
</dbReference>
<dbReference type="GO" id="GO:0061025">
    <property type="term" value="P:membrane fusion"/>
    <property type="evidence" value="ECO:0000318"/>
    <property type="project" value="GO_Central"/>
</dbReference>
<dbReference type="GO" id="GO:1904780">
    <property type="term" value="P:negative regulation of protein localization to centrosome"/>
    <property type="evidence" value="ECO:0000266"/>
    <property type="project" value="RGD"/>
</dbReference>
<dbReference type="GO" id="GO:0031468">
    <property type="term" value="P:nuclear membrane reassembly"/>
    <property type="evidence" value="ECO:0000318"/>
    <property type="project" value="GO_Central"/>
</dbReference>
<dbReference type="GO" id="GO:0046604">
    <property type="term" value="P:positive regulation of mitotic centrosome separation"/>
    <property type="evidence" value="ECO:0000266"/>
    <property type="project" value="RGD"/>
</dbReference>
<dbReference type="GO" id="GO:0043161">
    <property type="term" value="P:proteasome-mediated ubiquitin-dependent protein catabolic process"/>
    <property type="evidence" value="ECO:0000318"/>
    <property type="project" value="GO_Central"/>
</dbReference>
<dbReference type="FunFam" id="3.30.420.210:FF:000001">
    <property type="entry name" value="NSFL1 (P97) cofactor (P47)"/>
    <property type="match status" value="1"/>
</dbReference>
<dbReference type="FunFam" id="3.10.20.90:FF:000135">
    <property type="entry name" value="UBX domain-containing protein 2B"/>
    <property type="match status" value="1"/>
</dbReference>
<dbReference type="Gene3D" id="3.10.20.90">
    <property type="entry name" value="Phosphatidylinositol 3-kinase Catalytic Subunit, Chain A, domain 1"/>
    <property type="match status" value="1"/>
</dbReference>
<dbReference type="Gene3D" id="3.30.420.210">
    <property type="entry name" value="SEP domain"/>
    <property type="match status" value="1"/>
</dbReference>
<dbReference type="InterPro" id="IPR036241">
    <property type="entry name" value="NSFL1C_SEP_dom_sf"/>
</dbReference>
<dbReference type="InterPro" id="IPR012989">
    <property type="entry name" value="SEP_domain"/>
</dbReference>
<dbReference type="InterPro" id="IPR029071">
    <property type="entry name" value="Ubiquitin-like_domsf"/>
</dbReference>
<dbReference type="InterPro" id="IPR001012">
    <property type="entry name" value="UBX_dom"/>
</dbReference>
<dbReference type="PANTHER" id="PTHR23333">
    <property type="entry name" value="UBX DOMAIN CONTAINING PROTEIN"/>
    <property type="match status" value="1"/>
</dbReference>
<dbReference type="PANTHER" id="PTHR23333:SF14">
    <property type="entry name" value="UBX DOMAIN-CONTAINING PROTEIN 2B"/>
    <property type="match status" value="1"/>
</dbReference>
<dbReference type="Pfam" id="PF08059">
    <property type="entry name" value="SEP"/>
    <property type="match status" value="1"/>
</dbReference>
<dbReference type="Pfam" id="PF00789">
    <property type="entry name" value="UBX"/>
    <property type="match status" value="1"/>
</dbReference>
<dbReference type="SMART" id="SM00553">
    <property type="entry name" value="SEP"/>
    <property type="match status" value="1"/>
</dbReference>
<dbReference type="SMART" id="SM00166">
    <property type="entry name" value="UBX"/>
    <property type="match status" value="1"/>
</dbReference>
<dbReference type="SUPFAM" id="SSF102848">
    <property type="entry name" value="NSFL1 (p97 ATPase) cofactor p47, SEP domain"/>
    <property type="match status" value="1"/>
</dbReference>
<dbReference type="SUPFAM" id="SSF54236">
    <property type="entry name" value="Ubiquitin-like"/>
    <property type="match status" value="1"/>
</dbReference>
<dbReference type="PROSITE" id="PS51399">
    <property type="entry name" value="SEP"/>
    <property type="match status" value="1"/>
</dbReference>
<dbReference type="PROSITE" id="PS50033">
    <property type="entry name" value="UBX"/>
    <property type="match status" value="1"/>
</dbReference>
<feature type="initiator methionine" description="Removed" evidence="2">
    <location>
        <position position="1"/>
    </location>
</feature>
<feature type="chain" id="PRO_0000315230" description="UBX domain-containing protein 2B">
    <location>
        <begin position="2"/>
        <end position="331"/>
    </location>
</feature>
<feature type="domain" description="SEP" evidence="4">
    <location>
        <begin position="141"/>
        <end position="206"/>
    </location>
</feature>
<feature type="domain" description="UBX" evidence="3">
    <location>
        <begin position="252"/>
        <end position="329"/>
    </location>
</feature>
<feature type="region of interest" description="Disordered" evidence="5">
    <location>
        <begin position="1"/>
        <end position="26"/>
    </location>
</feature>
<feature type="region of interest" description="Disordered" evidence="5">
    <location>
        <begin position="38"/>
        <end position="63"/>
    </location>
</feature>
<feature type="compositionally biased region" description="Basic and acidic residues" evidence="5">
    <location>
        <begin position="38"/>
        <end position="48"/>
    </location>
</feature>
<feature type="modified residue" description="N-acetylalanine" evidence="2">
    <location>
        <position position="2"/>
    </location>
</feature>
<feature type="modified residue" description="Phosphoserine" evidence="2">
    <location>
        <position position="56"/>
    </location>
</feature>
<feature type="modified residue" description="Phosphothreonine" evidence="2">
    <location>
        <position position="59"/>
    </location>
</feature>
<feature type="modified residue" description="Phosphoserine" evidence="2">
    <location>
        <position position="66"/>
    </location>
</feature>
<feature type="modified residue" description="Phosphoserine" evidence="2">
    <location>
        <position position="231"/>
    </location>
</feature>
<feature type="modified residue" description="Phosphoserine" evidence="8">
    <location>
        <position position="234"/>
    </location>
</feature>
<feature type="modified residue" description="Phosphoserine" evidence="8">
    <location>
        <position position="235"/>
    </location>
</feature>
<organism>
    <name type="scientific">Rattus norvegicus</name>
    <name type="common">Rat</name>
    <dbReference type="NCBI Taxonomy" id="10116"/>
    <lineage>
        <taxon>Eukaryota</taxon>
        <taxon>Metazoa</taxon>
        <taxon>Chordata</taxon>
        <taxon>Craniata</taxon>
        <taxon>Vertebrata</taxon>
        <taxon>Euteleostomi</taxon>
        <taxon>Mammalia</taxon>
        <taxon>Eutheria</taxon>
        <taxon>Euarchontoglires</taxon>
        <taxon>Glires</taxon>
        <taxon>Rodentia</taxon>
        <taxon>Myomorpha</taxon>
        <taxon>Muroidea</taxon>
        <taxon>Muridae</taxon>
        <taxon>Murinae</taxon>
        <taxon>Rattus</taxon>
    </lineage>
</organism>
<proteinExistence type="evidence at protein level"/>
<keyword id="KW-0007">Acetylation</keyword>
<keyword id="KW-0963">Cytoplasm</keyword>
<keyword id="KW-0206">Cytoskeleton</keyword>
<keyword id="KW-0256">Endoplasmic reticulum</keyword>
<keyword id="KW-0333">Golgi apparatus</keyword>
<keyword id="KW-0539">Nucleus</keyword>
<keyword id="KW-0597">Phosphoprotein</keyword>
<keyword id="KW-1185">Reference proteome</keyword>
<accession>P0C627</accession>